<sequence length="210" mass="24359">MFRSVSLSSLIPFLIIVSIAMQRPENDVPMIMQSSWLVNEVIKSINSNGQYINALIKKDFQPTVLPVSFILRILKFTATTDSKDITAVLADSTHKIFAIFLFFPAIVDFENKYHHRMTYNTRSCLIRIHKANLKFMDKSTVKKCYGRKSDGGLAIAVLEVLEFDIFFKDQYSFINSIENRLKYVYDDVEYNQLCGKKKHKPEYEDLMCDI</sequence>
<accession>Q5A7P3</accession>
<accession>A0A1D8PIY7</accession>
<organism>
    <name type="scientific">Candida albicans (strain SC5314 / ATCC MYA-2876)</name>
    <name type="common">Yeast</name>
    <dbReference type="NCBI Taxonomy" id="237561"/>
    <lineage>
        <taxon>Eukaryota</taxon>
        <taxon>Fungi</taxon>
        <taxon>Dikarya</taxon>
        <taxon>Ascomycota</taxon>
        <taxon>Saccharomycotina</taxon>
        <taxon>Pichiomycetes</taxon>
        <taxon>Debaryomycetaceae</taxon>
        <taxon>Candida/Lodderomyces clade</taxon>
        <taxon>Candida</taxon>
    </lineage>
</organism>
<evidence type="ECO:0000250" key="1"/>
<evidence type="ECO:0000305" key="2"/>
<name>EST3_CANAL</name>
<proteinExistence type="inferred from homology"/>
<gene>
    <name type="primary">EST3</name>
    <name type="ordered locus">CAALFM_C300430WA</name>
    <name type="ORF">CaO19.12878</name>
    <name type="ORF">CaO19.5423</name>
</gene>
<keyword id="KW-0158">Chromosome</keyword>
<keyword id="KW-0539">Nucleus</keyword>
<keyword id="KW-1185">Reference proteome</keyword>
<keyword id="KW-0779">Telomere</keyword>
<dbReference type="EMBL" id="CP017625">
    <property type="protein sequence ID" value="AOW28093.1"/>
    <property type="molecule type" value="Genomic_DNA"/>
</dbReference>
<dbReference type="RefSeq" id="XP_717795.1">
    <property type="nucleotide sequence ID" value="XM_712702.1"/>
</dbReference>
<dbReference type="FunCoup" id="Q5A7P3">
    <property type="interactions" value="45"/>
</dbReference>
<dbReference type="STRING" id="237561.Q5A7P3"/>
<dbReference type="EnsemblFungi" id="C3_00430W_A-T">
    <property type="protein sequence ID" value="C3_00430W_A-T-p1"/>
    <property type="gene ID" value="C3_00430W_A"/>
</dbReference>
<dbReference type="GeneID" id="3640551"/>
<dbReference type="KEGG" id="cal:CAALFM_C300430WA"/>
<dbReference type="CGD" id="CAL0000201175">
    <property type="gene designation" value="EST3"/>
</dbReference>
<dbReference type="VEuPathDB" id="FungiDB:C3_00430W_A"/>
<dbReference type="eggNOG" id="ENOG502RQ3Q">
    <property type="taxonomic scope" value="Eukaryota"/>
</dbReference>
<dbReference type="HOGENOM" id="CLU_1354578_0_0_1"/>
<dbReference type="InParanoid" id="Q5A7P3"/>
<dbReference type="OMA" id="ADSTHKI"/>
<dbReference type="OrthoDB" id="4083059at2759"/>
<dbReference type="PRO" id="PR:Q5A7P3"/>
<dbReference type="Proteomes" id="UP000000559">
    <property type="component" value="Chromosome 3"/>
</dbReference>
<dbReference type="GO" id="GO:0000781">
    <property type="term" value="C:chromosome, telomeric region"/>
    <property type="evidence" value="ECO:0007669"/>
    <property type="project" value="UniProtKB-SubCell"/>
</dbReference>
<dbReference type="GO" id="GO:0005697">
    <property type="term" value="C:telomerase holoenzyme complex"/>
    <property type="evidence" value="ECO:0000314"/>
    <property type="project" value="CGD"/>
</dbReference>
<dbReference type="GO" id="GO:0042162">
    <property type="term" value="F:telomeric DNA binding"/>
    <property type="evidence" value="ECO:0007669"/>
    <property type="project" value="InterPro"/>
</dbReference>
<dbReference type="GO" id="GO:0032203">
    <property type="term" value="P:telomere formation via telomerase"/>
    <property type="evidence" value="ECO:0000315"/>
    <property type="project" value="CGD"/>
</dbReference>
<dbReference type="GO" id="GO:0007004">
    <property type="term" value="P:telomere maintenance via telomerase"/>
    <property type="evidence" value="ECO:0000314"/>
    <property type="project" value="CGD"/>
</dbReference>
<dbReference type="FunFam" id="2.40.50.960:FF:000005">
    <property type="entry name" value="Telomere replication protein EST3"/>
    <property type="match status" value="1"/>
</dbReference>
<dbReference type="Gene3D" id="2.40.50.960">
    <property type="match status" value="1"/>
</dbReference>
<dbReference type="InterPro" id="IPR019437">
    <property type="entry name" value="TPP1/Est3"/>
</dbReference>
<dbReference type="Pfam" id="PF10341">
    <property type="entry name" value="TPP1"/>
    <property type="match status" value="1"/>
</dbReference>
<reference key="1">
    <citation type="journal article" date="2004" name="Proc. Natl. Acad. Sci. U.S.A.">
        <title>The diploid genome sequence of Candida albicans.</title>
        <authorList>
            <person name="Jones T."/>
            <person name="Federspiel N.A."/>
            <person name="Chibana H."/>
            <person name="Dungan J."/>
            <person name="Kalman S."/>
            <person name="Magee B.B."/>
            <person name="Newport G."/>
            <person name="Thorstenson Y.R."/>
            <person name="Agabian N."/>
            <person name="Magee P.T."/>
            <person name="Davis R.W."/>
            <person name="Scherer S."/>
        </authorList>
    </citation>
    <scope>NUCLEOTIDE SEQUENCE [LARGE SCALE GENOMIC DNA]</scope>
    <source>
        <strain>SC5314 / ATCC MYA-2876</strain>
    </source>
</reference>
<reference key="2">
    <citation type="journal article" date="2007" name="Genome Biol.">
        <title>Assembly of the Candida albicans genome into sixteen supercontigs aligned on the eight chromosomes.</title>
        <authorList>
            <person name="van het Hoog M."/>
            <person name="Rast T.J."/>
            <person name="Martchenko M."/>
            <person name="Grindle S."/>
            <person name="Dignard D."/>
            <person name="Hogues H."/>
            <person name="Cuomo C."/>
            <person name="Berriman M."/>
            <person name="Scherer S."/>
            <person name="Magee B.B."/>
            <person name="Whiteway M."/>
            <person name="Chibana H."/>
            <person name="Nantel A."/>
            <person name="Magee P.T."/>
        </authorList>
    </citation>
    <scope>GENOME REANNOTATION</scope>
    <source>
        <strain>SC5314 / ATCC MYA-2876</strain>
    </source>
</reference>
<reference key="3">
    <citation type="journal article" date="2013" name="Genome Biol.">
        <title>Assembly of a phased diploid Candida albicans genome facilitates allele-specific measurements and provides a simple model for repeat and indel structure.</title>
        <authorList>
            <person name="Muzzey D."/>
            <person name="Schwartz K."/>
            <person name="Weissman J.S."/>
            <person name="Sherlock G."/>
        </authorList>
    </citation>
    <scope>NUCLEOTIDE SEQUENCE [LARGE SCALE GENOMIC DNA]</scope>
    <scope>GENOME REANNOTATION</scope>
    <source>
        <strain>SC5314 / ATCC MYA-2876</strain>
    </source>
</reference>
<feature type="chain" id="PRO_0000301751" description="Telomere replication protein EST3">
    <location>
        <begin position="1"/>
        <end position="210"/>
    </location>
</feature>
<protein>
    <recommendedName>
        <fullName>Telomere replication protein EST3</fullName>
    </recommendedName>
</protein>
<comment type="function">
    <text evidence="1">Component of the telomerase complex involved in telomere replication. Stimulates RNA/DNA heteroduplex unwinding which favors the telomere replication by the telomerase (By similarity).</text>
</comment>
<comment type="subunit">
    <text evidence="1">Component of the telomerase complex.</text>
</comment>
<comment type="subcellular location">
    <subcellularLocation>
        <location evidence="2">Nucleus</location>
    </subcellularLocation>
    <subcellularLocation>
        <location evidence="2">Chromosome</location>
        <location evidence="2">Telomere</location>
    </subcellularLocation>
</comment>
<comment type="similarity">
    <text evidence="2">Belongs to the EST3 family.</text>
</comment>